<sequence length="253" mass="27469">MHTKRIIPCLDVKDGRVVKGINFKGIIDVGNPVDLAKHYNDQGADELVFLDITATHEKRGIMMRVVEEVAEQIFIPFTVGGGLSSLEDIKAILRAGADKVSLNSAAVKNKKLIKESAFYFGNQCIVLAIDGKKRRDNSGWNVVINGGRIDTGIDLLSWVEEVTKLGAGEILLTSMDADGTKNGFDLALTKAVSDITSVPVIASGGCGCLEDFYDVLKNNTSDAALAASLFHYDELTVKDVKKYLINKKIPIRV</sequence>
<name>HIS6_CLOBA</name>
<feature type="chain" id="PRO_1000134982" description="Imidazole glycerol phosphate synthase subunit HisF">
    <location>
        <begin position="1"/>
        <end position="253"/>
    </location>
</feature>
<feature type="active site" evidence="1">
    <location>
        <position position="11"/>
    </location>
</feature>
<feature type="active site" evidence="1">
    <location>
        <position position="130"/>
    </location>
</feature>
<organism>
    <name type="scientific">Clostridium botulinum (strain Alaska E43 / Type E3)</name>
    <dbReference type="NCBI Taxonomy" id="508767"/>
    <lineage>
        <taxon>Bacteria</taxon>
        <taxon>Bacillati</taxon>
        <taxon>Bacillota</taxon>
        <taxon>Clostridia</taxon>
        <taxon>Eubacteriales</taxon>
        <taxon>Clostridiaceae</taxon>
        <taxon>Clostridium</taxon>
    </lineage>
</organism>
<reference key="1">
    <citation type="submission" date="2008-05" db="EMBL/GenBank/DDBJ databases">
        <title>Complete genome sequence of Clostridium botulinum E3 str. Alaska E43.</title>
        <authorList>
            <person name="Brinkac L.M."/>
            <person name="Brown J.L."/>
            <person name="Bruce D."/>
            <person name="Detter C."/>
            <person name="Munk C."/>
            <person name="Smith L.A."/>
            <person name="Smith T.J."/>
            <person name="Sutton G."/>
            <person name="Brettin T.S."/>
        </authorList>
    </citation>
    <scope>NUCLEOTIDE SEQUENCE [LARGE SCALE GENOMIC DNA]</scope>
    <source>
        <strain>Alaska E43 / Type E3</strain>
    </source>
</reference>
<gene>
    <name evidence="1" type="primary">hisF</name>
    <name type="ordered locus">CLH_2625</name>
</gene>
<evidence type="ECO:0000255" key="1">
    <source>
        <dbReference type="HAMAP-Rule" id="MF_01013"/>
    </source>
</evidence>
<dbReference type="EC" id="4.3.2.10" evidence="1"/>
<dbReference type="EMBL" id="CP001078">
    <property type="protein sequence ID" value="ACD51862.1"/>
    <property type="molecule type" value="Genomic_DNA"/>
</dbReference>
<dbReference type="RefSeq" id="WP_012450130.1">
    <property type="nucleotide sequence ID" value="NC_010723.1"/>
</dbReference>
<dbReference type="SMR" id="B2UX20"/>
<dbReference type="KEGG" id="cbt:CLH_2625"/>
<dbReference type="HOGENOM" id="CLU_048577_4_0_9"/>
<dbReference type="UniPathway" id="UPA00031">
    <property type="reaction ID" value="UER00010"/>
</dbReference>
<dbReference type="GO" id="GO:0005737">
    <property type="term" value="C:cytoplasm"/>
    <property type="evidence" value="ECO:0007669"/>
    <property type="project" value="UniProtKB-SubCell"/>
</dbReference>
<dbReference type="GO" id="GO:0000107">
    <property type="term" value="F:imidazoleglycerol-phosphate synthase activity"/>
    <property type="evidence" value="ECO:0007669"/>
    <property type="project" value="UniProtKB-UniRule"/>
</dbReference>
<dbReference type="GO" id="GO:0016829">
    <property type="term" value="F:lyase activity"/>
    <property type="evidence" value="ECO:0007669"/>
    <property type="project" value="UniProtKB-KW"/>
</dbReference>
<dbReference type="GO" id="GO:0000105">
    <property type="term" value="P:L-histidine biosynthetic process"/>
    <property type="evidence" value="ECO:0007669"/>
    <property type="project" value="UniProtKB-UniRule"/>
</dbReference>
<dbReference type="CDD" id="cd04731">
    <property type="entry name" value="HisF"/>
    <property type="match status" value="1"/>
</dbReference>
<dbReference type="FunFam" id="3.20.20.70:FF:000006">
    <property type="entry name" value="Imidazole glycerol phosphate synthase subunit HisF"/>
    <property type="match status" value="1"/>
</dbReference>
<dbReference type="Gene3D" id="3.20.20.70">
    <property type="entry name" value="Aldolase class I"/>
    <property type="match status" value="1"/>
</dbReference>
<dbReference type="HAMAP" id="MF_01013">
    <property type="entry name" value="HisF"/>
    <property type="match status" value="1"/>
</dbReference>
<dbReference type="InterPro" id="IPR013785">
    <property type="entry name" value="Aldolase_TIM"/>
</dbReference>
<dbReference type="InterPro" id="IPR006062">
    <property type="entry name" value="His_biosynth"/>
</dbReference>
<dbReference type="InterPro" id="IPR004651">
    <property type="entry name" value="HisF"/>
</dbReference>
<dbReference type="InterPro" id="IPR050064">
    <property type="entry name" value="IGPS_HisA/HisF"/>
</dbReference>
<dbReference type="InterPro" id="IPR011060">
    <property type="entry name" value="RibuloseP-bd_barrel"/>
</dbReference>
<dbReference type="NCBIfam" id="TIGR00735">
    <property type="entry name" value="hisF"/>
    <property type="match status" value="1"/>
</dbReference>
<dbReference type="PANTHER" id="PTHR21235:SF2">
    <property type="entry name" value="IMIDAZOLE GLYCEROL PHOSPHATE SYNTHASE HISHF"/>
    <property type="match status" value="1"/>
</dbReference>
<dbReference type="PANTHER" id="PTHR21235">
    <property type="entry name" value="IMIDAZOLE GLYCEROL PHOSPHATE SYNTHASE SUBUNIT HISF/H IGP SYNTHASE SUBUNIT HISF/H"/>
    <property type="match status" value="1"/>
</dbReference>
<dbReference type="Pfam" id="PF00977">
    <property type="entry name" value="His_biosynth"/>
    <property type="match status" value="1"/>
</dbReference>
<dbReference type="SUPFAM" id="SSF51366">
    <property type="entry name" value="Ribulose-phoshate binding barrel"/>
    <property type="match status" value="1"/>
</dbReference>
<keyword id="KW-0028">Amino-acid biosynthesis</keyword>
<keyword id="KW-0963">Cytoplasm</keyword>
<keyword id="KW-0368">Histidine biosynthesis</keyword>
<keyword id="KW-0456">Lyase</keyword>
<accession>B2UX20</accession>
<protein>
    <recommendedName>
        <fullName evidence="1">Imidazole glycerol phosphate synthase subunit HisF</fullName>
        <ecNumber evidence="1">4.3.2.10</ecNumber>
    </recommendedName>
    <alternativeName>
        <fullName evidence="1">IGP synthase cyclase subunit</fullName>
    </alternativeName>
    <alternativeName>
        <fullName evidence="1">IGP synthase subunit HisF</fullName>
    </alternativeName>
    <alternativeName>
        <fullName evidence="1">ImGP synthase subunit HisF</fullName>
        <shortName evidence="1">IGPS subunit HisF</shortName>
    </alternativeName>
</protein>
<proteinExistence type="inferred from homology"/>
<comment type="function">
    <text evidence="1">IGPS catalyzes the conversion of PRFAR and glutamine to IGP, AICAR and glutamate. The HisF subunit catalyzes the cyclization activity that produces IGP and AICAR from PRFAR using the ammonia provided by the HisH subunit.</text>
</comment>
<comment type="catalytic activity">
    <reaction evidence="1">
        <text>5-[(5-phospho-1-deoxy-D-ribulos-1-ylimino)methylamino]-1-(5-phospho-beta-D-ribosyl)imidazole-4-carboxamide + L-glutamine = D-erythro-1-(imidazol-4-yl)glycerol 3-phosphate + 5-amino-1-(5-phospho-beta-D-ribosyl)imidazole-4-carboxamide + L-glutamate + H(+)</text>
        <dbReference type="Rhea" id="RHEA:24793"/>
        <dbReference type="ChEBI" id="CHEBI:15378"/>
        <dbReference type="ChEBI" id="CHEBI:29985"/>
        <dbReference type="ChEBI" id="CHEBI:58278"/>
        <dbReference type="ChEBI" id="CHEBI:58359"/>
        <dbReference type="ChEBI" id="CHEBI:58475"/>
        <dbReference type="ChEBI" id="CHEBI:58525"/>
        <dbReference type="EC" id="4.3.2.10"/>
    </reaction>
</comment>
<comment type="pathway">
    <text evidence="1">Amino-acid biosynthesis; L-histidine biosynthesis; L-histidine from 5-phospho-alpha-D-ribose 1-diphosphate: step 5/9.</text>
</comment>
<comment type="subunit">
    <text evidence="1">Heterodimer of HisH and HisF.</text>
</comment>
<comment type="subcellular location">
    <subcellularLocation>
        <location evidence="1">Cytoplasm</location>
    </subcellularLocation>
</comment>
<comment type="similarity">
    <text evidence="1">Belongs to the HisA/HisF family.</text>
</comment>